<feature type="chain" id="PRO_0000265892" description="ATP synthase epsilon chain">
    <location>
        <begin position="1"/>
        <end position="139"/>
    </location>
</feature>
<sequence>MAMTYHLDVVSAEQQMFSGLVEKIQVTGSEGELGIYPGHAPLLTAIKPGMIRIVKQHGHEEFIYLSGGILEVQSGNVTVLADTAIRGQDLDEARAMEAKRKAEEHISSSHGDVDYAQASAELAKAIAQLRVIELTKKAM</sequence>
<name>ATPE_SHIBS</name>
<protein>
    <recommendedName>
        <fullName evidence="1">ATP synthase epsilon chain</fullName>
    </recommendedName>
    <alternativeName>
        <fullName evidence="1">ATP synthase F1 sector epsilon subunit</fullName>
    </alternativeName>
    <alternativeName>
        <fullName evidence="1">F-ATPase epsilon subunit</fullName>
    </alternativeName>
</protein>
<comment type="function">
    <text evidence="1">Produces ATP from ADP in the presence of a proton gradient across the membrane.</text>
</comment>
<comment type="subunit">
    <text>F-type ATPases have 2 components, CF(1) - the catalytic core - and CF(0) - the membrane proton channel. CF(1) has five subunits: alpha(3), beta(3), gamma(1), delta(1), epsilon(1). CF(0) has three main subunits: a, b and c.</text>
</comment>
<comment type="subcellular location">
    <subcellularLocation>
        <location evidence="1">Cell inner membrane</location>
        <topology evidence="1">Peripheral membrane protein</topology>
    </subcellularLocation>
</comment>
<comment type="similarity">
    <text evidence="1">Belongs to the ATPase epsilon chain family.</text>
</comment>
<accession>Q31UN1</accession>
<keyword id="KW-0066">ATP synthesis</keyword>
<keyword id="KW-0997">Cell inner membrane</keyword>
<keyword id="KW-1003">Cell membrane</keyword>
<keyword id="KW-0139">CF(1)</keyword>
<keyword id="KW-0375">Hydrogen ion transport</keyword>
<keyword id="KW-0406">Ion transport</keyword>
<keyword id="KW-0472">Membrane</keyword>
<keyword id="KW-0813">Transport</keyword>
<gene>
    <name evidence="1" type="primary">atpC</name>
    <name type="ordered locus">SBO_3756</name>
</gene>
<organism>
    <name type="scientific">Shigella boydii serotype 4 (strain Sb227)</name>
    <dbReference type="NCBI Taxonomy" id="300268"/>
    <lineage>
        <taxon>Bacteria</taxon>
        <taxon>Pseudomonadati</taxon>
        <taxon>Pseudomonadota</taxon>
        <taxon>Gammaproteobacteria</taxon>
        <taxon>Enterobacterales</taxon>
        <taxon>Enterobacteriaceae</taxon>
        <taxon>Shigella</taxon>
    </lineage>
</organism>
<evidence type="ECO:0000255" key="1">
    <source>
        <dbReference type="HAMAP-Rule" id="MF_00530"/>
    </source>
</evidence>
<reference key="1">
    <citation type="journal article" date="2005" name="Nucleic Acids Res.">
        <title>Genome dynamics and diversity of Shigella species, the etiologic agents of bacillary dysentery.</title>
        <authorList>
            <person name="Yang F."/>
            <person name="Yang J."/>
            <person name="Zhang X."/>
            <person name="Chen L."/>
            <person name="Jiang Y."/>
            <person name="Yan Y."/>
            <person name="Tang X."/>
            <person name="Wang J."/>
            <person name="Xiong Z."/>
            <person name="Dong J."/>
            <person name="Xue Y."/>
            <person name="Zhu Y."/>
            <person name="Xu X."/>
            <person name="Sun L."/>
            <person name="Chen S."/>
            <person name="Nie H."/>
            <person name="Peng J."/>
            <person name="Xu J."/>
            <person name="Wang Y."/>
            <person name="Yuan Z."/>
            <person name="Wen Y."/>
            <person name="Yao Z."/>
            <person name="Shen Y."/>
            <person name="Qiang B."/>
            <person name="Hou Y."/>
            <person name="Yu J."/>
            <person name="Jin Q."/>
        </authorList>
    </citation>
    <scope>NUCLEOTIDE SEQUENCE [LARGE SCALE GENOMIC DNA]</scope>
    <source>
        <strain>Sb227</strain>
    </source>
</reference>
<dbReference type="EMBL" id="CP000036">
    <property type="protein sequence ID" value="ABB68227.1"/>
    <property type="molecule type" value="Genomic_DNA"/>
</dbReference>
<dbReference type="RefSeq" id="WP_001251973.1">
    <property type="nucleotide sequence ID" value="NC_007613.1"/>
</dbReference>
<dbReference type="SMR" id="Q31UN1"/>
<dbReference type="KEGG" id="sbo:SBO_3756"/>
<dbReference type="HOGENOM" id="CLU_084338_2_0_6"/>
<dbReference type="Proteomes" id="UP000007067">
    <property type="component" value="Chromosome"/>
</dbReference>
<dbReference type="GO" id="GO:0005886">
    <property type="term" value="C:plasma membrane"/>
    <property type="evidence" value="ECO:0007669"/>
    <property type="project" value="UniProtKB-SubCell"/>
</dbReference>
<dbReference type="GO" id="GO:0045259">
    <property type="term" value="C:proton-transporting ATP synthase complex"/>
    <property type="evidence" value="ECO:0007669"/>
    <property type="project" value="UniProtKB-KW"/>
</dbReference>
<dbReference type="GO" id="GO:0005524">
    <property type="term" value="F:ATP binding"/>
    <property type="evidence" value="ECO:0007669"/>
    <property type="project" value="UniProtKB-UniRule"/>
</dbReference>
<dbReference type="GO" id="GO:0046933">
    <property type="term" value="F:proton-transporting ATP synthase activity, rotational mechanism"/>
    <property type="evidence" value="ECO:0007669"/>
    <property type="project" value="UniProtKB-UniRule"/>
</dbReference>
<dbReference type="CDD" id="cd12152">
    <property type="entry name" value="F1-ATPase_delta"/>
    <property type="match status" value="1"/>
</dbReference>
<dbReference type="FunFam" id="1.20.5.440:FF:000001">
    <property type="entry name" value="ATP synthase epsilon chain"/>
    <property type="match status" value="1"/>
</dbReference>
<dbReference type="FunFam" id="2.60.15.10:FF:000001">
    <property type="entry name" value="ATP synthase epsilon chain"/>
    <property type="match status" value="1"/>
</dbReference>
<dbReference type="Gene3D" id="1.20.5.440">
    <property type="entry name" value="ATP synthase delta/epsilon subunit, C-terminal domain"/>
    <property type="match status" value="1"/>
</dbReference>
<dbReference type="Gene3D" id="2.60.15.10">
    <property type="entry name" value="F0F1 ATP synthase delta/epsilon subunit, N-terminal"/>
    <property type="match status" value="1"/>
</dbReference>
<dbReference type="HAMAP" id="MF_00530">
    <property type="entry name" value="ATP_synth_epsil_bac"/>
    <property type="match status" value="1"/>
</dbReference>
<dbReference type="InterPro" id="IPR036794">
    <property type="entry name" value="ATP_F1_dsu/esu_C_sf"/>
</dbReference>
<dbReference type="InterPro" id="IPR001469">
    <property type="entry name" value="ATP_synth_F1_dsu/esu"/>
</dbReference>
<dbReference type="InterPro" id="IPR020546">
    <property type="entry name" value="ATP_synth_F1_dsu/esu_N"/>
</dbReference>
<dbReference type="InterPro" id="IPR020547">
    <property type="entry name" value="ATP_synth_F1_esu_C"/>
</dbReference>
<dbReference type="InterPro" id="IPR036771">
    <property type="entry name" value="ATPsynth_dsu/esu_N"/>
</dbReference>
<dbReference type="NCBIfam" id="TIGR01216">
    <property type="entry name" value="ATP_synt_epsi"/>
    <property type="match status" value="1"/>
</dbReference>
<dbReference type="NCBIfam" id="NF001847">
    <property type="entry name" value="PRK00571.1-4"/>
    <property type="match status" value="1"/>
</dbReference>
<dbReference type="PANTHER" id="PTHR13822">
    <property type="entry name" value="ATP SYNTHASE DELTA/EPSILON CHAIN"/>
    <property type="match status" value="1"/>
</dbReference>
<dbReference type="PANTHER" id="PTHR13822:SF10">
    <property type="entry name" value="ATP SYNTHASE EPSILON CHAIN, CHLOROPLASTIC"/>
    <property type="match status" value="1"/>
</dbReference>
<dbReference type="Pfam" id="PF00401">
    <property type="entry name" value="ATP-synt_DE"/>
    <property type="match status" value="1"/>
</dbReference>
<dbReference type="Pfam" id="PF02823">
    <property type="entry name" value="ATP-synt_DE_N"/>
    <property type="match status" value="1"/>
</dbReference>
<dbReference type="SUPFAM" id="SSF46604">
    <property type="entry name" value="Epsilon subunit of F1F0-ATP synthase C-terminal domain"/>
    <property type="match status" value="1"/>
</dbReference>
<dbReference type="SUPFAM" id="SSF51344">
    <property type="entry name" value="Epsilon subunit of F1F0-ATP synthase N-terminal domain"/>
    <property type="match status" value="1"/>
</dbReference>
<proteinExistence type="inferred from homology"/>